<name>PDXJ_BORA1</name>
<dbReference type="EC" id="2.6.99.2" evidence="1"/>
<dbReference type="EMBL" id="AM167904">
    <property type="protein sequence ID" value="CAJ50069.1"/>
    <property type="molecule type" value="Genomic_DNA"/>
</dbReference>
<dbReference type="RefSeq" id="WP_012418118.1">
    <property type="nucleotide sequence ID" value="NC_010645.1"/>
</dbReference>
<dbReference type="SMR" id="Q2KXM4"/>
<dbReference type="STRING" id="360910.BAV2459"/>
<dbReference type="GeneID" id="92934364"/>
<dbReference type="KEGG" id="bav:BAV2459"/>
<dbReference type="eggNOG" id="COG0854">
    <property type="taxonomic scope" value="Bacteria"/>
</dbReference>
<dbReference type="HOGENOM" id="CLU_074563_0_0_4"/>
<dbReference type="OrthoDB" id="9806590at2"/>
<dbReference type="UniPathway" id="UPA00244">
    <property type="reaction ID" value="UER00313"/>
</dbReference>
<dbReference type="Proteomes" id="UP000001977">
    <property type="component" value="Chromosome"/>
</dbReference>
<dbReference type="GO" id="GO:0005829">
    <property type="term" value="C:cytosol"/>
    <property type="evidence" value="ECO:0007669"/>
    <property type="project" value="TreeGrafter"/>
</dbReference>
<dbReference type="GO" id="GO:0033856">
    <property type="term" value="F:pyridoxine 5'-phosphate synthase activity"/>
    <property type="evidence" value="ECO:0007669"/>
    <property type="project" value="UniProtKB-EC"/>
</dbReference>
<dbReference type="GO" id="GO:0008615">
    <property type="term" value="P:pyridoxine biosynthetic process"/>
    <property type="evidence" value="ECO:0007669"/>
    <property type="project" value="UniProtKB-UniRule"/>
</dbReference>
<dbReference type="CDD" id="cd00003">
    <property type="entry name" value="PNPsynthase"/>
    <property type="match status" value="1"/>
</dbReference>
<dbReference type="Gene3D" id="3.20.20.70">
    <property type="entry name" value="Aldolase class I"/>
    <property type="match status" value="1"/>
</dbReference>
<dbReference type="HAMAP" id="MF_00279">
    <property type="entry name" value="PdxJ"/>
    <property type="match status" value="1"/>
</dbReference>
<dbReference type="InterPro" id="IPR013785">
    <property type="entry name" value="Aldolase_TIM"/>
</dbReference>
<dbReference type="InterPro" id="IPR004569">
    <property type="entry name" value="PyrdxlP_synth_PdxJ"/>
</dbReference>
<dbReference type="InterPro" id="IPR036130">
    <property type="entry name" value="Pyridoxine-5'_phos_synth"/>
</dbReference>
<dbReference type="NCBIfam" id="TIGR00559">
    <property type="entry name" value="pdxJ"/>
    <property type="match status" value="1"/>
</dbReference>
<dbReference type="NCBIfam" id="NF003623">
    <property type="entry name" value="PRK05265.1-1"/>
    <property type="match status" value="1"/>
</dbReference>
<dbReference type="NCBIfam" id="NF003625">
    <property type="entry name" value="PRK05265.1-3"/>
    <property type="match status" value="1"/>
</dbReference>
<dbReference type="NCBIfam" id="NF003627">
    <property type="entry name" value="PRK05265.1-5"/>
    <property type="match status" value="1"/>
</dbReference>
<dbReference type="PANTHER" id="PTHR30456">
    <property type="entry name" value="PYRIDOXINE 5'-PHOSPHATE SYNTHASE"/>
    <property type="match status" value="1"/>
</dbReference>
<dbReference type="PANTHER" id="PTHR30456:SF0">
    <property type="entry name" value="PYRIDOXINE 5'-PHOSPHATE SYNTHASE"/>
    <property type="match status" value="1"/>
</dbReference>
<dbReference type="Pfam" id="PF03740">
    <property type="entry name" value="PdxJ"/>
    <property type="match status" value="1"/>
</dbReference>
<dbReference type="SUPFAM" id="SSF63892">
    <property type="entry name" value="Pyridoxine 5'-phosphate synthase"/>
    <property type="match status" value="1"/>
</dbReference>
<organism>
    <name type="scientific">Bordetella avium (strain 197N)</name>
    <dbReference type="NCBI Taxonomy" id="360910"/>
    <lineage>
        <taxon>Bacteria</taxon>
        <taxon>Pseudomonadati</taxon>
        <taxon>Pseudomonadota</taxon>
        <taxon>Betaproteobacteria</taxon>
        <taxon>Burkholderiales</taxon>
        <taxon>Alcaligenaceae</taxon>
        <taxon>Bordetella</taxon>
    </lineage>
</organism>
<reference key="1">
    <citation type="journal article" date="2006" name="J. Bacteriol.">
        <title>Comparison of the genome sequence of the poultry pathogen Bordetella avium with those of B. bronchiseptica, B. pertussis, and B. parapertussis reveals extensive diversity in surface structures associated with host interaction.</title>
        <authorList>
            <person name="Sebaihia M."/>
            <person name="Preston A."/>
            <person name="Maskell D.J."/>
            <person name="Kuzmiak H."/>
            <person name="Connell T.D."/>
            <person name="King N.D."/>
            <person name="Orndorff P.E."/>
            <person name="Miyamoto D.M."/>
            <person name="Thomson N.R."/>
            <person name="Harris D."/>
            <person name="Goble A."/>
            <person name="Lord A."/>
            <person name="Murphy L."/>
            <person name="Quail M.A."/>
            <person name="Rutter S."/>
            <person name="Squares R."/>
            <person name="Squares S."/>
            <person name="Woodward J."/>
            <person name="Parkhill J."/>
            <person name="Temple L.M."/>
        </authorList>
    </citation>
    <scope>NUCLEOTIDE SEQUENCE [LARGE SCALE GENOMIC DNA]</scope>
    <source>
        <strain>197N</strain>
    </source>
</reference>
<accession>Q2KXM4</accession>
<gene>
    <name evidence="1" type="primary">pdxJ</name>
    <name type="ordered locus">BAV2459</name>
</gene>
<feature type="chain" id="PRO_1000022362" description="Pyridoxine 5'-phosphate synthase">
    <location>
        <begin position="1"/>
        <end position="241"/>
    </location>
</feature>
<feature type="active site" description="Proton acceptor" evidence="1">
    <location>
        <position position="43"/>
    </location>
</feature>
<feature type="active site" description="Proton acceptor" evidence="1">
    <location>
        <position position="70"/>
    </location>
</feature>
<feature type="active site" description="Proton donor" evidence="1">
    <location>
        <position position="190"/>
    </location>
</feature>
<feature type="binding site" evidence="1">
    <location>
        <position position="7"/>
    </location>
    <ligand>
        <name>3-amino-2-oxopropyl phosphate</name>
        <dbReference type="ChEBI" id="CHEBI:57279"/>
    </ligand>
</feature>
<feature type="binding site" evidence="1">
    <location>
        <begin position="9"/>
        <end position="10"/>
    </location>
    <ligand>
        <name>1-deoxy-D-xylulose 5-phosphate</name>
        <dbReference type="ChEBI" id="CHEBI:57792"/>
    </ligand>
</feature>
<feature type="binding site" evidence="1">
    <location>
        <position position="18"/>
    </location>
    <ligand>
        <name>3-amino-2-oxopropyl phosphate</name>
        <dbReference type="ChEBI" id="CHEBI:57279"/>
    </ligand>
</feature>
<feature type="binding site" evidence="1">
    <location>
        <position position="45"/>
    </location>
    <ligand>
        <name>1-deoxy-D-xylulose 5-phosphate</name>
        <dbReference type="ChEBI" id="CHEBI:57792"/>
    </ligand>
</feature>
<feature type="binding site" evidence="1">
    <location>
        <position position="50"/>
    </location>
    <ligand>
        <name>1-deoxy-D-xylulose 5-phosphate</name>
        <dbReference type="ChEBI" id="CHEBI:57792"/>
    </ligand>
</feature>
<feature type="binding site" evidence="1">
    <location>
        <position position="100"/>
    </location>
    <ligand>
        <name>1-deoxy-D-xylulose 5-phosphate</name>
        <dbReference type="ChEBI" id="CHEBI:57792"/>
    </ligand>
</feature>
<feature type="binding site" evidence="1">
    <location>
        <position position="191"/>
    </location>
    <ligand>
        <name>3-amino-2-oxopropyl phosphate</name>
        <dbReference type="ChEBI" id="CHEBI:57279"/>
    </ligand>
</feature>
<feature type="binding site" evidence="1">
    <location>
        <begin position="212"/>
        <end position="213"/>
    </location>
    <ligand>
        <name>3-amino-2-oxopropyl phosphate</name>
        <dbReference type="ChEBI" id="CHEBI:57279"/>
    </ligand>
</feature>
<feature type="site" description="Transition state stabilizer" evidence="1">
    <location>
        <position position="151"/>
    </location>
</feature>
<keyword id="KW-0963">Cytoplasm</keyword>
<keyword id="KW-0664">Pyridoxine biosynthesis</keyword>
<keyword id="KW-1185">Reference proteome</keyword>
<keyword id="KW-0808">Transferase</keyword>
<protein>
    <recommendedName>
        <fullName evidence="1">Pyridoxine 5'-phosphate synthase</fullName>
        <shortName evidence="1">PNP synthase</shortName>
        <ecNumber evidence="1">2.6.99.2</ecNumber>
    </recommendedName>
</protein>
<comment type="function">
    <text evidence="1">Catalyzes the complicated ring closure reaction between the two acyclic compounds 1-deoxy-D-xylulose-5-phosphate (DXP) and 3-amino-2-oxopropyl phosphate (1-amino-acetone-3-phosphate or AAP) to form pyridoxine 5'-phosphate (PNP) and inorganic phosphate.</text>
</comment>
<comment type="catalytic activity">
    <reaction evidence="1">
        <text>3-amino-2-oxopropyl phosphate + 1-deoxy-D-xylulose 5-phosphate = pyridoxine 5'-phosphate + phosphate + 2 H2O + H(+)</text>
        <dbReference type="Rhea" id="RHEA:15265"/>
        <dbReference type="ChEBI" id="CHEBI:15377"/>
        <dbReference type="ChEBI" id="CHEBI:15378"/>
        <dbReference type="ChEBI" id="CHEBI:43474"/>
        <dbReference type="ChEBI" id="CHEBI:57279"/>
        <dbReference type="ChEBI" id="CHEBI:57792"/>
        <dbReference type="ChEBI" id="CHEBI:58589"/>
        <dbReference type="EC" id="2.6.99.2"/>
    </reaction>
</comment>
<comment type="pathway">
    <text evidence="1">Cofactor biosynthesis; pyridoxine 5'-phosphate biosynthesis; pyridoxine 5'-phosphate from D-erythrose 4-phosphate: step 5/5.</text>
</comment>
<comment type="subunit">
    <text evidence="1">Homooctamer; tetramer of dimers.</text>
</comment>
<comment type="subcellular location">
    <subcellularLocation>
        <location evidence="1">Cytoplasm</location>
    </subcellularLocation>
</comment>
<comment type="similarity">
    <text evidence="1">Belongs to the PNP synthase family.</text>
</comment>
<proteinExistence type="inferred from homology"/>
<sequence>MIELGINIDHVATLRQQRHTAYPDPLAAAVRAEDAGADLITLHLREDRRHIQDADVYAIRPRLRTRMNLECALTPEMLEIACAVKPSDVCLVPEKRAELTTEGGLDVLGQFDAVADAVALLTEAGIRVSLFIDPDAAQIEAAARAQAPVIELHTGAYAEAEGELAERELERIRAAVDVGLLHGLRVNAGHGLHYGNVQAVAAIDGISELNIGHAIVAQAVFDGWEKAIRDMKALMIQARAR</sequence>
<evidence type="ECO:0000255" key="1">
    <source>
        <dbReference type="HAMAP-Rule" id="MF_00279"/>
    </source>
</evidence>